<name>MTAD_NITV4</name>
<organism>
    <name type="scientific">Nitratidesulfovibrio vulgaris (strain DP4)</name>
    <name type="common">Desulfovibrio vulgaris</name>
    <dbReference type="NCBI Taxonomy" id="391774"/>
    <lineage>
        <taxon>Bacteria</taxon>
        <taxon>Pseudomonadati</taxon>
        <taxon>Thermodesulfobacteriota</taxon>
        <taxon>Desulfovibrionia</taxon>
        <taxon>Desulfovibrionales</taxon>
        <taxon>Desulfovibrionaceae</taxon>
        <taxon>Nitratidesulfovibrio</taxon>
    </lineage>
</organism>
<keyword id="KW-0378">Hydrolase</keyword>
<keyword id="KW-0479">Metal-binding</keyword>
<keyword id="KW-0862">Zinc</keyword>
<comment type="function">
    <text evidence="1">Catalyzes the deamination of 5-methylthioadenosine and S-adenosyl-L-homocysteine into 5-methylthioinosine and S-inosyl-L-homocysteine, respectively. Is also able to deaminate adenosine.</text>
</comment>
<comment type="catalytic activity">
    <reaction evidence="1">
        <text>S-adenosyl-L-homocysteine + H2O + H(+) = S-inosyl-L-homocysteine + NH4(+)</text>
        <dbReference type="Rhea" id="RHEA:20716"/>
        <dbReference type="ChEBI" id="CHEBI:15377"/>
        <dbReference type="ChEBI" id="CHEBI:15378"/>
        <dbReference type="ChEBI" id="CHEBI:28938"/>
        <dbReference type="ChEBI" id="CHEBI:57856"/>
        <dbReference type="ChEBI" id="CHEBI:57985"/>
        <dbReference type="EC" id="3.5.4.28"/>
    </reaction>
</comment>
<comment type="catalytic activity">
    <reaction evidence="1">
        <text>S-methyl-5'-thioadenosine + H2O + H(+) = S-methyl-5'-thioinosine + NH4(+)</text>
        <dbReference type="Rhea" id="RHEA:25025"/>
        <dbReference type="ChEBI" id="CHEBI:15377"/>
        <dbReference type="ChEBI" id="CHEBI:15378"/>
        <dbReference type="ChEBI" id="CHEBI:17509"/>
        <dbReference type="ChEBI" id="CHEBI:28938"/>
        <dbReference type="ChEBI" id="CHEBI:48595"/>
        <dbReference type="EC" id="3.5.4.31"/>
    </reaction>
</comment>
<comment type="cofactor">
    <cofactor evidence="1">
        <name>Zn(2+)</name>
        <dbReference type="ChEBI" id="CHEBI:29105"/>
    </cofactor>
    <text evidence="1">Binds 1 zinc ion per subunit.</text>
</comment>
<comment type="similarity">
    <text evidence="1">Belongs to the metallo-dependent hydrolases superfamily. MTA/SAH deaminase family.</text>
</comment>
<gene>
    <name evidence="1" type="primary">mtaD</name>
    <name type="ordered locus">Dvul_1335</name>
</gene>
<proteinExistence type="inferred from homology"/>
<dbReference type="EC" id="3.5.4.28" evidence="1"/>
<dbReference type="EC" id="3.5.4.31" evidence="1"/>
<dbReference type="EMBL" id="CP000527">
    <property type="protein sequence ID" value="ABM28353.1"/>
    <property type="molecule type" value="Genomic_DNA"/>
</dbReference>
<dbReference type="RefSeq" id="WP_011792202.1">
    <property type="nucleotide sequence ID" value="NC_008751.1"/>
</dbReference>
<dbReference type="SMR" id="A1VD37"/>
<dbReference type="KEGG" id="dvl:Dvul_1335"/>
<dbReference type="HOGENOM" id="CLU_012358_2_1_7"/>
<dbReference type="Proteomes" id="UP000009173">
    <property type="component" value="Chromosome"/>
</dbReference>
<dbReference type="GO" id="GO:0090614">
    <property type="term" value="F:5'-methylthioadenosine deaminase activity"/>
    <property type="evidence" value="ECO:0007669"/>
    <property type="project" value="UniProtKB-UniRule"/>
</dbReference>
<dbReference type="GO" id="GO:0046872">
    <property type="term" value="F:metal ion binding"/>
    <property type="evidence" value="ECO:0007669"/>
    <property type="project" value="UniProtKB-KW"/>
</dbReference>
<dbReference type="GO" id="GO:0050270">
    <property type="term" value="F:S-adenosylhomocysteine deaminase activity"/>
    <property type="evidence" value="ECO:0007669"/>
    <property type="project" value="UniProtKB-UniRule"/>
</dbReference>
<dbReference type="CDD" id="cd01298">
    <property type="entry name" value="ATZ_TRZ_like"/>
    <property type="match status" value="1"/>
</dbReference>
<dbReference type="FunFam" id="3.20.20.140:FF:000014">
    <property type="entry name" value="5-methylthioadenosine/S-adenosylhomocysteine deaminase"/>
    <property type="match status" value="1"/>
</dbReference>
<dbReference type="Gene3D" id="3.20.20.140">
    <property type="entry name" value="Metal-dependent hydrolases"/>
    <property type="match status" value="1"/>
</dbReference>
<dbReference type="Gene3D" id="2.30.40.10">
    <property type="entry name" value="Urease, subunit C, domain 1"/>
    <property type="match status" value="1"/>
</dbReference>
<dbReference type="HAMAP" id="MF_01281">
    <property type="entry name" value="MTA_SAH_deamin"/>
    <property type="match status" value="1"/>
</dbReference>
<dbReference type="InterPro" id="IPR006680">
    <property type="entry name" value="Amidohydro-rel"/>
</dbReference>
<dbReference type="InterPro" id="IPR023512">
    <property type="entry name" value="Deaminase_MtaD/DadD"/>
</dbReference>
<dbReference type="InterPro" id="IPR011059">
    <property type="entry name" value="Metal-dep_hydrolase_composite"/>
</dbReference>
<dbReference type="InterPro" id="IPR032466">
    <property type="entry name" value="Metal_Hydrolase"/>
</dbReference>
<dbReference type="InterPro" id="IPR050287">
    <property type="entry name" value="MTA/SAH_deaminase"/>
</dbReference>
<dbReference type="PANTHER" id="PTHR43794:SF11">
    <property type="entry name" value="AMIDOHYDROLASE-RELATED DOMAIN-CONTAINING PROTEIN"/>
    <property type="match status" value="1"/>
</dbReference>
<dbReference type="PANTHER" id="PTHR43794">
    <property type="entry name" value="AMINOHYDROLASE SSNA-RELATED"/>
    <property type="match status" value="1"/>
</dbReference>
<dbReference type="Pfam" id="PF01979">
    <property type="entry name" value="Amidohydro_1"/>
    <property type="match status" value="1"/>
</dbReference>
<dbReference type="SUPFAM" id="SSF51338">
    <property type="entry name" value="Composite domain of metallo-dependent hydrolases"/>
    <property type="match status" value="1"/>
</dbReference>
<dbReference type="SUPFAM" id="SSF51556">
    <property type="entry name" value="Metallo-dependent hydrolases"/>
    <property type="match status" value="1"/>
</dbReference>
<reference key="1">
    <citation type="journal article" date="2009" name="Environ. Microbiol.">
        <title>Contribution of mobile genetic elements to Desulfovibrio vulgaris genome plasticity.</title>
        <authorList>
            <person name="Walker C.B."/>
            <person name="Stolyar S."/>
            <person name="Chivian D."/>
            <person name="Pinel N."/>
            <person name="Gabster J.A."/>
            <person name="Dehal P.S."/>
            <person name="He Z."/>
            <person name="Yang Z.K."/>
            <person name="Yen H.C."/>
            <person name="Zhou J."/>
            <person name="Wall J.D."/>
            <person name="Hazen T.C."/>
            <person name="Arkin A.P."/>
            <person name="Stahl D.A."/>
        </authorList>
    </citation>
    <scope>NUCLEOTIDE SEQUENCE [LARGE SCALE GENOMIC DNA]</scope>
    <source>
        <strain>DP4</strain>
    </source>
</reference>
<sequence>MPLPCDTILQAALIVTQDDARTVIEDGAIAIHEGRIAAVGQRDAIVGNWHGATVIDMGASLIMPGLVNAHTHASMTLLRGLADDLPLMDWLTGHIFPVEKGLTGELVELGALLGCAEMLRTGTTAFSDMYLIEDATLRAVDRAGLRCLAGEAIFAFPSPAYADPETAFDLVRAQHDRWKHHARAALAVAPHAVYTSTPAILARCRDLAEELGLPIHLHLAETATETAQCIEQHGARPVPYCDGLGLLTPRTTLAHCVDLTEGEIDLLAERGVTVAHCPESNMKLASGIAPATAMLGRGMTLGLGTDGAASNNSLNMFTEMTSCALLHKVHHMDPTCAPASAVLDMATRGGAHALHMQGIGRIEAGCPADIIALDLRAPNMQPIFNPASHLVYAATGHETRLAMVGGEVLYLDGCYTRFDMDDLLKEVRKARTWAMEQVRAAR</sequence>
<evidence type="ECO:0000255" key="1">
    <source>
        <dbReference type="HAMAP-Rule" id="MF_01281"/>
    </source>
</evidence>
<protein>
    <recommendedName>
        <fullName evidence="1">5-methylthioadenosine/S-adenosylhomocysteine deaminase</fullName>
        <shortName evidence="1">MTA/SAH deaminase</shortName>
        <ecNumber evidence="1">3.5.4.28</ecNumber>
        <ecNumber evidence="1">3.5.4.31</ecNumber>
    </recommendedName>
</protein>
<feature type="chain" id="PRO_0000312455" description="5-methylthioadenosine/S-adenosylhomocysteine deaminase">
    <location>
        <begin position="1"/>
        <end position="442"/>
    </location>
</feature>
<feature type="binding site" evidence="1">
    <location>
        <position position="70"/>
    </location>
    <ligand>
        <name>Zn(2+)</name>
        <dbReference type="ChEBI" id="CHEBI:29105"/>
    </ligand>
</feature>
<feature type="binding site" evidence="1">
    <location>
        <position position="72"/>
    </location>
    <ligand>
        <name>Zn(2+)</name>
        <dbReference type="ChEBI" id="CHEBI:29105"/>
    </ligand>
</feature>
<feature type="binding site" evidence="1">
    <location>
        <position position="99"/>
    </location>
    <ligand>
        <name>substrate</name>
    </ligand>
</feature>
<feature type="binding site" evidence="1">
    <location>
        <position position="191"/>
    </location>
    <ligand>
        <name>substrate</name>
    </ligand>
</feature>
<feature type="binding site" evidence="1">
    <location>
        <position position="218"/>
    </location>
    <ligand>
        <name>Zn(2+)</name>
        <dbReference type="ChEBI" id="CHEBI:29105"/>
    </ligand>
</feature>
<feature type="binding site" evidence="1">
    <location>
        <position position="221"/>
    </location>
    <ligand>
        <name>substrate</name>
    </ligand>
</feature>
<feature type="binding site" evidence="1">
    <location>
        <position position="306"/>
    </location>
    <ligand>
        <name>substrate</name>
    </ligand>
</feature>
<feature type="binding site" evidence="1">
    <location>
        <position position="306"/>
    </location>
    <ligand>
        <name>Zn(2+)</name>
        <dbReference type="ChEBI" id="CHEBI:29105"/>
    </ligand>
</feature>
<accession>A1VD37</accession>